<organism>
    <name type="scientific">Monilinia fructicola</name>
    <name type="common">Brown rot fungus</name>
    <name type="synonym">Ciboria fructicola</name>
    <dbReference type="NCBI Taxonomy" id="38448"/>
    <lineage>
        <taxon>Eukaryota</taxon>
        <taxon>Fungi</taxon>
        <taxon>Dikarya</taxon>
        <taxon>Ascomycota</taxon>
        <taxon>Pezizomycotina</taxon>
        <taxon>Leotiomycetes</taxon>
        <taxon>Helotiales</taxon>
        <taxon>Sclerotiniaceae</taxon>
        <taxon>Monilinia</taxon>
    </lineage>
</organism>
<accession>Q8TGB8</accession>
<comment type="function">
    <text evidence="1">Catalyzes the hydrolysis of complex carboxylic polyesters found in the cell wall of plants (By similarity). Degrades cutin, a macromolecule that forms the structure of the plant cuticle (By similarity). Allows pathogenic fungi to penetrate through the cuticular barrier into the host plant during the initial stage of fungal infection (By similarity).</text>
</comment>
<comment type="catalytic activity">
    <reaction evidence="4">
        <text>cutin + H2O = cutin monomers.</text>
        <dbReference type="EC" id="3.1.1.74"/>
    </reaction>
</comment>
<comment type="subcellular location">
    <subcellularLocation>
        <location evidence="2">Secreted</location>
    </subcellularLocation>
</comment>
<comment type="PTM">
    <text evidence="2">The 2 disulfide bonds play a critical role in holding the catalytic residues in juxta-position; reduction of the disulfide bridges results in the complete inactivation of the enzyme.</text>
</comment>
<comment type="similarity">
    <text evidence="5">Belongs to the cutinase family.</text>
</comment>
<feature type="signal peptide" evidence="3">
    <location>
        <begin position="1"/>
        <end position="20"/>
    </location>
</feature>
<feature type="chain" id="PRO_0000006444" description="Cutinase">
    <location>
        <begin position="21"/>
        <end position="201"/>
    </location>
</feature>
<feature type="active site" description="Nucleophile" evidence="4">
    <location>
        <position position="116"/>
    </location>
</feature>
<feature type="active site" evidence="4">
    <location>
        <position position="168"/>
    </location>
</feature>
<feature type="active site" description="Proton donor/acceptor" evidence="4">
    <location>
        <position position="181"/>
    </location>
</feature>
<feature type="site" description="Transition state stabilizer" evidence="1">
    <location>
        <position position="117"/>
    </location>
</feature>
<feature type="disulfide bond" evidence="1">
    <location>
        <begin position="31"/>
        <end position="105"/>
    </location>
</feature>
<feature type="disulfide bond" evidence="1">
    <location>
        <begin position="164"/>
        <end position="171"/>
    </location>
</feature>
<sequence length="201" mass="20227">MKTSAQQLLSLLLLPLSAIAAPTGEIEARACSTVTVIFARGTTETPTLGTVIGPQFLAALKSSFGGSVTMNGVPYAADVPGFLKGGDPTGSKVMANMVSSALSSCPNTKLVISGYSQGGQLVHNAAKQLPAATTAKIAAAVIFGDPDNGSPVQGVPAAKTKIICHAGDNICQHGSMILMPHLTYGMDATAAAAFVKQVAGS</sequence>
<name>CUTI_MONFR</name>
<dbReference type="EC" id="3.1.1.74" evidence="4"/>
<dbReference type="EMBL" id="AF305598">
    <property type="protein sequence ID" value="AAM10822.1"/>
    <property type="molecule type" value="mRNA"/>
</dbReference>
<dbReference type="SMR" id="Q8TGB8"/>
<dbReference type="ESTHER" id="monfr-CUT1">
    <property type="family name" value="Cutinase"/>
</dbReference>
<dbReference type="VEuPathDB" id="FungiDB:MFRU_013g00510"/>
<dbReference type="OrthoDB" id="2975078at2759"/>
<dbReference type="BRENDA" id="3.1.1.74">
    <property type="organism ID" value="3409"/>
</dbReference>
<dbReference type="GO" id="GO:0005576">
    <property type="term" value="C:extracellular region"/>
    <property type="evidence" value="ECO:0007669"/>
    <property type="project" value="UniProtKB-SubCell"/>
</dbReference>
<dbReference type="GO" id="GO:0050525">
    <property type="term" value="F:cutinase activity"/>
    <property type="evidence" value="ECO:0000250"/>
    <property type="project" value="UniProtKB"/>
</dbReference>
<dbReference type="GO" id="GO:0016052">
    <property type="term" value="P:carbohydrate catabolic process"/>
    <property type="evidence" value="ECO:0007669"/>
    <property type="project" value="TreeGrafter"/>
</dbReference>
<dbReference type="Gene3D" id="3.40.50.1820">
    <property type="entry name" value="alpha/beta hydrolase"/>
    <property type="match status" value="1"/>
</dbReference>
<dbReference type="InterPro" id="IPR029058">
    <property type="entry name" value="AB_hydrolase_fold"/>
</dbReference>
<dbReference type="InterPro" id="IPR000675">
    <property type="entry name" value="Cutinase/axe"/>
</dbReference>
<dbReference type="InterPro" id="IPR043580">
    <property type="entry name" value="CUTINASE_1"/>
</dbReference>
<dbReference type="InterPro" id="IPR011150">
    <property type="entry name" value="Cutinase_monf"/>
</dbReference>
<dbReference type="PANTHER" id="PTHR48250:SF1">
    <property type="entry name" value="CUTINASE"/>
    <property type="match status" value="1"/>
</dbReference>
<dbReference type="PANTHER" id="PTHR48250">
    <property type="entry name" value="CUTINASE 2-RELATED"/>
    <property type="match status" value="1"/>
</dbReference>
<dbReference type="Pfam" id="PF01083">
    <property type="entry name" value="Cutinase"/>
    <property type="match status" value="1"/>
</dbReference>
<dbReference type="PRINTS" id="PR00129">
    <property type="entry name" value="CUTINASE"/>
</dbReference>
<dbReference type="SMART" id="SM01110">
    <property type="entry name" value="Cutinase"/>
    <property type="match status" value="1"/>
</dbReference>
<dbReference type="SUPFAM" id="SSF53474">
    <property type="entry name" value="alpha/beta-Hydrolases"/>
    <property type="match status" value="1"/>
</dbReference>
<dbReference type="PROSITE" id="PS00155">
    <property type="entry name" value="CUTINASE_1"/>
    <property type="match status" value="1"/>
</dbReference>
<reference key="1">
    <citation type="journal article" date="2002" name="Fungal Genet. Biol.">
        <title>Molecular cloning, characterization, and expression of a redox-responsive cutinase from Monilinia fructicola (Wint.) honey.</title>
        <authorList>
            <person name="Wang G.Y."/>
            <person name="Michailides T.J."/>
            <person name="Hammock B.D."/>
            <person name="Lee Y.M."/>
            <person name="Bostock R.M."/>
        </authorList>
    </citation>
    <scope>NUCLEOTIDE SEQUENCE [MRNA]</scope>
</reference>
<proteinExistence type="evidence at transcript level"/>
<keyword id="KW-1015">Disulfide bond</keyword>
<keyword id="KW-0378">Hydrolase</keyword>
<keyword id="KW-0964">Secreted</keyword>
<keyword id="KW-0719">Serine esterase</keyword>
<keyword id="KW-0732">Signal</keyword>
<keyword id="KW-0843">Virulence</keyword>
<protein>
    <recommendedName>
        <fullName>Cutinase</fullName>
        <ecNumber evidence="4">3.1.1.74</ecNumber>
    </recommendedName>
    <alternativeName>
        <fullName>Cutin hydrolase</fullName>
    </alternativeName>
</protein>
<evidence type="ECO:0000250" key="1">
    <source>
        <dbReference type="UniProtKB" id="P00590"/>
    </source>
</evidence>
<evidence type="ECO:0000250" key="2">
    <source>
        <dbReference type="UniProtKB" id="P11373"/>
    </source>
</evidence>
<evidence type="ECO:0000255" key="3"/>
<evidence type="ECO:0000255" key="4">
    <source>
        <dbReference type="PROSITE-ProRule" id="PRU10108"/>
    </source>
</evidence>
<evidence type="ECO:0000305" key="5"/>
<gene>
    <name type="primary">CUT1</name>
</gene>